<sequence>MTGNELRARFLKFFEDRGHTVVPSSLLIPHNDPTLLFANAGMNQFKDCFLGMEDRGYTRATSSQKCVRAGGKHNDLENVGRTARHHTFFEMLGNFSFGDYFKKEAIAFAWEFLTKDLGLDKDRLYVTVYTDDDEAADIWHHQEGVPRERIFRFGEKDNFWSMGDTGPCGPCSEIFWDNGPEVGCGSPDCTVGCDCDRYMEIWNNVFMQFNRSADGTMTPLPKPSVDTGMGLERICTVMQGVKSNYDTDLLQGVIRHVERLSGKRYRENEKDDVSMRVIADHARATTFLICDGVLPSNEGRGYVLRRIMRRAARHAKMLGFAEPVLYRTVDAVNEMMGGSYPELLEREEYIKKVIRAEEERFAETLDRGLAILNDAVAQLKGEGKTVIPGETLFRLYDTFGFPTDLTADIVRAEGFTIDEPGFEACMGRQREQAREHWKGSGEEGIAAVHKELHNRGVRSVFVGYDEKCSYAAIGSILRGGSEVAEAKAGEDVEIITDRTPFYGESGGQAGDTGTISTGSAHVRVTGTIRPYPDLIVHRGTVVEGTIKTGEACDLKVASVDRDATARNHTATHLLQTALRRVLGEHVKQAGSLVAPDRLRFDFTHFAAMTPEEIRRVEEIVNTFIMENDTVHAREMAVEEAMESGATALFGEKYGDRVRVVKVGEVSAELCGGTHVRAAGDIGSFKILSEAGIAAGVRRIEALTGMGALRHIQELEDEKRQIAALMKAEGGDNIDRLQKLLARQREMQREIETLQGQLNAAKSGDLLADVREVNGVKVLATKVEVDDPKKLRELADTLKDRLGSGVVALGCEKDGRANLLVAVTKDLAGRIRAGDIIRQLAPVIGGSGGGKPELAQAGGSQPDMLAEALGKVYGLIG</sequence>
<organism>
    <name type="scientific">Geobacter metallireducens (strain ATCC 53774 / DSM 7210 / GS-15)</name>
    <dbReference type="NCBI Taxonomy" id="269799"/>
    <lineage>
        <taxon>Bacteria</taxon>
        <taxon>Pseudomonadati</taxon>
        <taxon>Thermodesulfobacteriota</taxon>
        <taxon>Desulfuromonadia</taxon>
        <taxon>Geobacterales</taxon>
        <taxon>Geobacteraceae</taxon>
        <taxon>Geobacter</taxon>
    </lineage>
</organism>
<proteinExistence type="inferred from homology"/>
<protein>
    <recommendedName>
        <fullName evidence="1">Alanine--tRNA ligase</fullName>
        <ecNumber evidence="1">6.1.1.7</ecNumber>
    </recommendedName>
    <alternativeName>
        <fullName evidence="1">Alanyl-tRNA synthetase</fullName>
        <shortName evidence="1">AlaRS</shortName>
    </alternativeName>
</protein>
<dbReference type="EC" id="6.1.1.7" evidence="1"/>
<dbReference type="EMBL" id="CP000148">
    <property type="protein sequence ID" value="ABB30447.1"/>
    <property type="molecule type" value="Genomic_DNA"/>
</dbReference>
<dbReference type="RefSeq" id="WP_004512790.1">
    <property type="nucleotide sequence ID" value="NC_007517.1"/>
</dbReference>
<dbReference type="SMR" id="Q39Z77"/>
<dbReference type="STRING" id="269799.Gmet_0201"/>
<dbReference type="KEGG" id="gme:Gmet_0201"/>
<dbReference type="eggNOG" id="COG0013">
    <property type="taxonomic scope" value="Bacteria"/>
</dbReference>
<dbReference type="HOGENOM" id="CLU_004485_1_1_7"/>
<dbReference type="Proteomes" id="UP000007073">
    <property type="component" value="Chromosome"/>
</dbReference>
<dbReference type="GO" id="GO:0005829">
    <property type="term" value="C:cytosol"/>
    <property type="evidence" value="ECO:0007669"/>
    <property type="project" value="TreeGrafter"/>
</dbReference>
<dbReference type="GO" id="GO:0004813">
    <property type="term" value="F:alanine-tRNA ligase activity"/>
    <property type="evidence" value="ECO:0007669"/>
    <property type="project" value="UniProtKB-UniRule"/>
</dbReference>
<dbReference type="GO" id="GO:0002161">
    <property type="term" value="F:aminoacyl-tRNA deacylase activity"/>
    <property type="evidence" value="ECO:0007669"/>
    <property type="project" value="TreeGrafter"/>
</dbReference>
<dbReference type="GO" id="GO:0005524">
    <property type="term" value="F:ATP binding"/>
    <property type="evidence" value="ECO:0007669"/>
    <property type="project" value="UniProtKB-UniRule"/>
</dbReference>
<dbReference type="GO" id="GO:0000049">
    <property type="term" value="F:tRNA binding"/>
    <property type="evidence" value="ECO:0007669"/>
    <property type="project" value="UniProtKB-KW"/>
</dbReference>
<dbReference type="GO" id="GO:0008270">
    <property type="term" value="F:zinc ion binding"/>
    <property type="evidence" value="ECO:0007669"/>
    <property type="project" value="UniProtKB-UniRule"/>
</dbReference>
<dbReference type="GO" id="GO:0006419">
    <property type="term" value="P:alanyl-tRNA aminoacylation"/>
    <property type="evidence" value="ECO:0007669"/>
    <property type="project" value="UniProtKB-UniRule"/>
</dbReference>
<dbReference type="GO" id="GO:0045892">
    <property type="term" value="P:negative regulation of DNA-templated transcription"/>
    <property type="evidence" value="ECO:0007669"/>
    <property type="project" value="TreeGrafter"/>
</dbReference>
<dbReference type="CDD" id="cd00673">
    <property type="entry name" value="AlaRS_core"/>
    <property type="match status" value="1"/>
</dbReference>
<dbReference type="FunFam" id="3.10.310.40:FF:000001">
    <property type="entry name" value="Alanine--tRNA ligase"/>
    <property type="match status" value="1"/>
</dbReference>
<dbReference type="FunFam" id="3.30.54.20:FF:000001">
    <property type="entry name" value="Alanine--tRNA ligase"/>
    <property type="match status" value="1"/>
</dbReference>
<dbReference type="FunFam" id="3.30.930.10:FF:000004">
    <property type="entry name" value="Alanine--tRNA ligase"/>
    <property type="match status" value="1"/>
</dbReference>
<dbReference type="FunFam" id="3.30.980.10:FF:000004">
    <property type="entry name" value="Alanine--tRNA ligase, cytoplasmic"/>
    <property type="match status" value="1"/>
</dbReference>
<dbReference type="Gene3D" id="2.40.30.130">
    <property type="match status" value="1"/>
</dbReference>
<dbReference type="Gene3D" id="3.10.310.40">
    <property type="match status" value="1"/>
</dbReference>
<dbReference type="Gene3D" id="3.30.54.20">
    <property type="match status" value="1"/>
</dbReference>
<dbReference type="Gene3D" id="6.10.250.550">
    <property type="match status" value="1"/>
</dbReference>
<dbReference type="Gene3D" id="3.30.930.10">
    <property type="entry name" value="Bira Bifunctional Protein, Domain 2"/>
    <property type="match status" value="1"/>
</dbReference>
<dbReference type="Gene3D" id="3.30.980.10">
    <property type="entry name" value="Threonyl-trna Synthetase, Chain A, domain 2"/>
    <property type="match status" value="1"/>
</dbReference>
<dbReference type="HAMAP" id="MF_00036_B">
    <property type="entry name" value="Ala_tRNA_synth_B"/>
    <property type="match status" value="1"/>
</dbReference>
<dbReference type="InterPro" id="IPR045864">
    <property type="entry name" value="aa-tRNA-synth_II/BPL/LPL"/>
</dbReference>
<dbReference type="InterPro" id="IPR002318">
    <property type="entry name" value="Ala-tRNA-lgiase_IIc"/>
</dbReference>
<dbReference type="InterPro" id="IPR018162">
    <property type="entry name" value="Ala-tRNA-ligase_IIc_anticod-bd"/>
</dbReference>
<dbReference type="InterPro" id="IPR018165">
    <property type="entry name" value="Ala-tRNA-synth_IIc_core"/>
</dbReference>
<dbReference type="InterPro" id="IPR018164">
    <property type="entry name" value="Ala-tRNA-synth_IIc_N"/>
</dbReference>
<dbReference type="InterPro" id="IPR050058">
    <property type="entry name" value="Ala-tRNA_ligase"/>
</dbReference>
<dbReference type="InterPro" id="IPR023033">
    <property type="entry name" value="Ala_tRNA_ligase_euk/bac"/>
</dbReference>
<dbReference type="InterPro" id="IPR003156">
    <property type="entry name" value="DHHA1_dom"/>
</dbReference>
<dbReference type="InterPro" id="IPR018163">
    <property type="entry name" value="Thr/Ala-tRNA-synth_IIc_edit"/>
</dbReference>
<dbReference type="InterPro" id="IPR009000">
    <property type="entry name" value="Transl_B-barrel_sf"/>
</dbReference>
<dbReference type="InterPro" id="IPR012947">
    <property type="entry name" value="tRNA_SAD"/>
</dbReference>
<dbReference type="NCBIfam" id="TIGR00344">
    <property type="entry name" value="alaS"/>
    <property type="match status" value="1"/>
</dbReference>
<dbReference type="PANTHER" id="PTHR11777:SF9">
    <property type="entry name" value="ALANINE--TRNA LIGASE, CYTOPLASMIC"/>
    <property type="match status" value="1"/>
</dbReference>
<dbReference type="PANTHER" id="PTHR11777">
    <property type="entry name" value="ALANYL-TRNA SYNTHETASE"/>
    <property type="match status" value="1"/>
</dbReference>
<dbReference type="Pfam" id="PF02272">
    <property type="entry name" value="DHHA1"/>
    <property type="match status" value="1"/>
</dbReference>
<dbReference type="Pfam" id="PF01411">
    <property type="entry name" value="tRNA-synt_2c"/>
    <property type="match status" value="1"/>
</dbReference>
<dbReference type="Pfam" id="PF07973">
    <property type="entry name" value="tRNA_SAD"/>
    <property type="match status" value="1"/>
</dbReference>
<dbReference type="PRINTS" id="PR00980">
    <property type="entry name" value="TRNASYNTHALA"/>
</dbReference>
<dbReference type="SMART" id="SM00863">
    <property type="entry name" value="tRNA_SAD"/>
    <property type="match status" value="1"/>
</dbReference>
<dbReference type="SUPFAM" id="SSF55681">
    <property type="entry name" value="Class II aaRS and biotin synthetases"/>
    <property type="match status" value="1"/>
</dbReference>
<dbReference type="SUPFAM" id="SSF101353">
    <property type="entry name" value="Putative anticodon-binding domain of alanyl-tRNA synthetase (AlaRS)"/>
    <property type="match status" value="1"/>
</dbReference>
<dbReference type="SUPFAM" id="SSF55186">
    <property type="entry name" value="ThrRS/AlaRS common domain"/>
    <property type="match status" value="1"/>
</dbReference>
<dbReference type="SUPFAM" id="SSF50447">
    <property type="entry name" value="Translation proteins"/>
    <property type="match status" value="1"/>
</dbReference>
<dbReference type="PROSITE" id="PS50860">
    <property type="entry name" value="AA_TRNA_LIGASE_II_ALA"/>
    <property type="match status" value="1"/>
</dbReference>
<reference key="1">
    <citation type="journal article" date="2009" name="BMC Microbiol.">
        <title>The genome sequence of Geobacter metallireducens: features of metabolism, physiology and regulation common and dissimilar to Geobacter sulfurreducens.</title>
        <authorList>
            <person name="Aklujkar M."/>
            <person name="Krushkal J."/>
            <person name="DiBartolo G."/>
            <person name="Lapidus A."/>
            <person name="Land M.L."/>
            <person name="Lovley D.R."/>
        </authorList>
    </citation>
    <scope>NUCLEOTIDE SEQUENCE [LARGE SCALE GENOMIC DNA]</scope>
    <source>
        <strain>ATCC 53774 / DSM 7210 / GS-15</strain>
    </source>
</reference>
<gene>
    <name evidence="1" type="primary">alaS</name>
    <name type="ordered locus">Gmet_0201</name>
</gene>
<keyword id="KW-0030">Aminoacyl-tRNA synthetase</keyword>
<keyword id="KW-0067">ATP-binding</keyword>
<keyword id="KW-0963">Cytoplasm</keyword>
<keyword id="KW-0436">Ligase</keyword>
<keyword id="KW-0479">Metal-binding</keyword>
<keyword id="KW-0547">Nucleotide-binding</keyword>
<keyword id="KW-0648">Protein biosynthesis</keyword>
<keyword id="KW-1185">Reference proteome</keyword>
<keyword id="KW-0694">RNA-binding</keyword>
<keyword id="KW-0820">tRNA-binding</keyword>
<keyword id="KW-0862">Zinc</keyword>
<name>SYA_GEOMG</name>
<accession>Q39Z77</accession>
<comment type="function">
    <text evidence="1">Catalyzes the attachment of alanine to tRNA(Ala) in a two-step reaction: alanine is first activated by ATP to form Ala-AMP and then transferred to the acceptor end of tRNA(Ala). Also edits incorrectly charged Ser-tRNA(Ala) and Gly-tRNA(Ala) via its editing domain.</text>
</comment>
<comment type="catalytic activity">
    <reaction evidence="1">
        <text>tRNA(Ala) + L-alanine + ATP = L-alanyl-tRNA(Ala) + AMP + diphosphate</text>
        <dbReference type="Rhea" id="RHEA:12540"/>
        <dbReference type="Rhea" id="RHEA-COMP:9657"/>
        <dbReference type="Rhea" id="RHEA-COMP:9923"/>
        <dbReference type="ChEBI" id="CHEBI:30616"/>
        <dbReference type="ChEBI" id="CHEBI:33019"/>
        <dbReference type="ChEBI" id="CHEBI:57972"/>
        <dbReference type="ChEBI" id="CHEBI:78442"/>
        <dbReference type="ChEBI" id="CHEBI:78497"/>
        <dbReference type="ChEBI" id="CHEBI:456215"/>
        <dbReference type="EC" id="6.1.1.7"/>
    </reaction>
</comment>
<comment type="cofactor">
    <cofactor evidence="1">
        <name>Zn(2+)</name>
        <dbReference type="ChEBI" id="CHEBI:29105"/>
    </cofactor>
    <text evidence="1">Binds 1 zinc ion per subunit.</text>
</comment>
<comment type="subcellular location">
    <subcellularLocation>
        <location evidence="1">Cytoplasm</location>
    </subcellularLocation>
</comment>
<comment type="domain">
    <text evidence="1">Consists of three domains; the N-terminal catalytic domain, the editing domain and the C-terminal C-Ala domain. The editing domain removes incorrectly charged amino acids, while the C-Ala domain, along with tRNA(Ala), serves as a bridge to cooperatively bring together the editing and aminoacylation centers thus stimulating deacylation of misacylated tRNAs.</text>
</comment>
<comment type="similarity">
    <text evidence="1">Belongs to the class-II aminoacyl-tRNA synthetase family.</text>
</comment>
<evidence type="ECO:0000255" key="1">
    <source>
        <dbReference type="HAMAP-Rule" id="MF_00036"/>
    </source>
</evidence>
<feature type="chain" id="PRO_0000347621" description="Alanine--tRNA ligase">
    <location>
        <begin position="1"/>
        <end position="876"/>
    </location>
</feature>
<feature type="binding site" evidence="1">
    <location>
        <position position="568"/>
    </location>
    <ligand>
        <name>Zn(2+)</name>
        <dbReference type="ChEBI" id="CHEBI:29105"/>
    </ligand>
</feature>
<feature type="binding site" evidence="1">
    <location>
        <position position="572"/>
    </location>
    <ligand>
        <name>Zn(2+)</name>
        <dbReference type="ChEBI" id="CHEBI:29105"/>
    </ligand>
</feature>
<feature type="binding site" evidence="1">
    <location>
        <position position="670"/>
    </location>
    <ligand>
        <name>Zn(2+)</name>
        <dbReference type="ChEBI" id="CHEBI:29105"/>
    </ligand>
</feature>
<feature type="binding site" evidence="1">
    <location>
        <position position="674"/>
    </location>
    <ligand>
        <name>Zn(2+)</name>
        <dbReference type="ChEBI" id="CHEBI:29105"/>
    </ligand>
</feature>